<sequence>MEEDDSYVPSDLTAEERQELENIRRRKQELLADIQRLKDEIAEVANEIENLGSTEERKNMQRNKQVAMGRKKFNMDPKKGIQFLIENDLLKNTCEDIAQFLYKGEGLNKTAIGDYLGERDEFNIQVLHAFVELHEFTDLNLVQALRQFLWSFRLPGEAQKIDRMMEAFAQRYCQCNNGVFQSTDTCYVLSFAIIMLNTSLHNPNVKDKPTVERFIAMNRGINDGGDLPEELLRNLYESIKNEPFKIPEDDGNDLTHTFFNPDREGWLLKLGGGRVKTWKRRWFILTDNCLYYFEYTTDKEPRGIIPLENLSIREVEDSKKPNCFELYIPDNKDQVIKACKTEADGRVVEGNHTVYRISAPTPEEKEEWIKCIKAAISRDPFYEMLAARKKKVSSTKRH</sequence>
<evidence type="ECO:0000250" key="1"/>
<evidence type="ECO:0000250" key="2">
    <source>
        <dbReference type="UniProtKB" id="Q15438"/>
    </source>
</evidence>
<evidence type="ECO:0000250" key="3">
    <source>
        <dbReference type="UniProtKB" id="Q9QX11"/>
    </source>
</evidence>
<evidence type="ECO:0000255" key="4"/>
<evidence type="ECO:0000255" key="5">
    <source>
        <dbReference type="PROSITE-ProRule" id="PRU00145"/>
    </source>
</evidence>
<evidence type="ECO:0000255" key="6">
    <source>
        <dbReference type="PROSITE-ProRule" id="PRU00189"/>
    </source>
</evidence>
<organism>
    <name type="scientific">Chlorocebus aethiops</name>
    <name type="common">Green monkey</name>
    <name type="synonym">Cercopithecus aethiops</name>
    <dbReference type="NCBI Taxonomy" id="9534"/>
    <lineage>
        <taxon>Eukaryota</taxon>
        <taxon>Metazoa</taxon>
        <taxon>Chordata</taxon>
        <taxon>Craniata</taxon>
        <taxon>Vertebrata</taxon>
        <taxon>Euteleostomi</taxon>
        <taxon>Mammalia</taxon>
        <taxon>Eutheria</taxon>
        <taxon>Euarchontoglires</taxon>
        <taxon>Primates</taxon>
        <taxon>Haplorrhini</taxon>
        <taxon>Catarrhini</taxon>
        <taxon>Cercopithecidae</taxon>
        <taxon>Cercopithecinae</taxon>
        <taxon>Chlorocebus</taxon>
    </lineage>
</organism>
<feature type="chain" id="PRO_0000120193" description="Cytohesin-1">
    <location>
        <begin position="1"/>
        <end position="398"/>
    </location>
</feature>
<feature type="domain" description="SEC7" evidence="6">
    <location>
        <begin position="73"/>
        <end position="202"/>
    </location>
</feature>
<feature type="domain" description="PH" evidence="5">
    <location>
        <begin position="260"/>
        <end position="377"/>
    </location>
</feature>
<feature type="region of interest" description="C-terminal autoinhibitory region" evidence="1">
    <location>
        <begin position="388"/>
        <end position="396"/>
    </location>
</feature>
<feature type="coiled-coil region" evidence="4">
    <location>
        <begin position="10"/>
        <end position="67"/>
    </location>
</feature>
<feature type="binding site" evidence="1">
    <location>
        <begin position="269"/>
        <end position="277"/>
    </location>
    <ligand>
        <name>a 1,2-diacyl-sn-glycero-3-phospho-(1D-myo-inositol-3,4,5-trisphosphate)</name>
        <dbReference type="ChEBI" id="CHEBI:57836"/>
    </ligand>
</feature>
<feature type="binding site" evidence="1">
    <location>
        <position position="281"/>
    </location>
    <ligand>
        <name>a 1,2-diacyl-sn-glycero-3-phospho-(1D-myo-inositol-3,4,5-trisphosphate)</name>
        <dbReference type="ChEBI" id="CHEBI:57836"/>
    </ligand>
</feature>
<feature type="binding site" evidence="1">
    <location>
        <position position="292"/>
    </location>
    <ligand>
        <name>a 1,2-diacyl-sn-glycero-3-phospho-(1D-myo-inositol-3,4,5-trisphosphate)</name>
        <dbReference type="ChEBI" id="CHEBI:57836"/>
    </ligand>
</feature>
<feature type="binding site" evidence="1">
    <location>
        <position position="302"/>
    </location>
    <ligand>
        <name>a 1,2-diacyl-sn-glycero-3-phospho-(1D-myo-inositol-3,4,5-trisphosphate)</name>
        <dbReference type="ChEBI" id="CHEBI:57836"/>
    </ligand>
</feature>
<feature type="binding site" evidence="1">
    <location>
        <position position="351"/>
    </location>
    <ligand>
        <name>a 1,2-diacyl-sn-glycero-3-phospho-(1D-myo-inositol-3,4,5-trisphosphate)</name>
        <dbReference type="ChEBI" id="CHEBI:57836"/>
    </ligand>
</feature>
<feature type="modified residue" description="N-acetylmethionine" evidence="2">
    <location>
        <position position="1"/>
    </location>
</feature>
<proteinExistence type="evidence at transcript level"/>
<comment type="function">
    <text evidence="3">Promotes guanine-nucleotide exchange on ARF1, ARF5 and ARF6. Promotes the activation of ARF factors through replacement of GDP with GTP. Plays an important role in membrane trafficking, during junctional remodeling and epithelial polarization, through regulation of ARF6 activity.</text>
</comment>
<comment type="subunit">
    <text evidence="2 3">Interacts with TRIM23 and CYTIP (By similarity). Interacts (via coiled-coil domain) with FRMD4A (via coiled-coil domain) (By similarity). Interacts with FRMD4B (By similarity). Found in a complex with PARD3, CYTH1 and FRMD4A. Interacts (via N-terminal domain) with INAVA (via N-terminal domain) (By similarity).</text>
</comment>
<comment type="subcellular location">
    <subcellularLocation>
        <location evidence="2">Cell membrane</location>
        <topology evidence="2">Peripheral membrane protein</topology>
    </subcellularLocation>
    <subcellularLocation>
        <location evidence="3">Cytoplasm</location>
        <location evidence="3">Cytosol</location>
    </subcellularLocation>
    <subcellularLocation>
        <location evidence="3">Cell junction</location>
        <location evidence="3">Tight junction</location>
    </subcellularLocation>
    <subcellularLocation>
        <location evidence="3">Cell junction</location>
        <location evidence="3">Adherens junction</location>
    </subcellularLocation>
    <text evidence="3">Colocalized with TJP1 during epithelial polarization.</text>
</comment>
<comment type="domain">
    <text evidence="1">Binds via its PH domain to the inositol head group of phosphatidylinositol 3,4,5-trisphosphate.</text>
</comment>
<comment type="domain">
    <text evidence="3">Autoinhibited by its C-terminal basic region.</text>
</comment>
<comment type="PTM">
    <text evidence="2">Ubiquitinated by SCF(FBXW11) E3 ubiquitin-protein ligase complex. Ubiquitination induces proteasomal degradation.</text>
</comment>
<keyword id="KW-0007">Acetylation</keyword>
<keyword id="KW-0965">Cell junction</keyword>
<keyword id="KW-1003">Cell membrane</keyword>
<keyword id="KW-0175">Coiled coil</keyword>
<keyword id="KW-0963">Cytoplasm</keyword>
<keyword id="KW-0344">Guanine-nucleotide releasing factor</keyword>
<keyword id="KW-0446">Lipid-binding</keyword>
<keyword id="KW-0472">Membrane</keyword>
<keyword id="KW-0796">Tight junction</keyword>
<keyword id="KW-0832">Ubl conjugation</keyword>
<reference key="1">
    <citation type="submission" date="1999-01" db="EMBL/GenBank/DDBJ databases">
        <title>Identification and characterization of cytohesin-1 gene in the African green monkey (Cercopithecus aethiops): alternative splicing of mRNA transcript, sequence and phylogeny.</title>
        <authorList>
            <person name="Kim H.-S."/>
        </authorList>
    </citation>
    <scope>NUCLEOTIDE SEQUENCE [MRNA]</scope>
</reference>
<dbReference type="EMBL" id="AB022021">
    <property type="protein sequence ID" value="BAA87918.1"/>
    <property type="molecule type" value="mRNA"/>
</dbReference>
<dbReference type="SMR" id="Q76MZ1"/>
<dbReference type="GO" id="GO:0005912">
    <property type="term" value="C:adherens junction"/>
    <property type="evidence" value="ECO:0007669"/>
    <property type="project" value="UniProtKB-SubCell"/>
</dbReference>
<dbReference type="GO" id="GO:0005923">
    <property type="term" value="C:bicellular tight junction"/>
    <property type="evidence" value="ECO:0007669"/>
    <property type="project" value="UniProtKB-SubCell"/>
</dbReference>
<dbReference type="GO" id="GO:0009898">
    <property type="term" value="C:cytoplasmic side of plasma membrane"/>
    <property type="evidence" value="ECO:0000250"/>
    <property type="project" value="UniProtKB"/>
</dbReference>
<dbReference type="GO" id="GO:0005829">
    <property type="term" value="C:cytosol"/>
    <property type="evidence" value="ECO:0000250"/>
    <property type="project" value="UniProtKB"/>
</dbReference>
<dbReference type="GO" id="GO:0005085">
    <property type="term" value="F:guanyl-nucleotide exchange factor activity"/>
    <property type="evidence" value="ECO:0000250"/>
    <property type="project" value="UniProtKB"/>
</dbReference>
<dbReference type="GO" id="GO:0008289">
    <property type="term" value="F:lipid binding"/>
    <property type="evidence" value="ECO:0007669"/>
    <property type="project" value="UniProtKB-KW"/>
</dbReference>
<dbReference type="GO" id="GO:0032012">
    <property type="term" value="P:regulation of ARF protein signal transduction"/>
    <property type="evidence" value="ECO:0007669"/>
    <property type="project" value="InterPro"/>
</dbReference>
<dbReference type="CDD" id="cd01252">
    <property type="entry name" value="PH_GRP1-like"/>
    <property type="match status" value="1"/>
</dbReference>
<dbReference type="CDD" id="cd00171">
    <property type="entry name" value="Sec7"/>
    <property type="match status" value="1"/>
</dbReference>
<dbReference type="FunFam" id="1.10.1000.11:FF:000002">
    <property type="entry name" value="Cytohesin 1"/>
    <property type="match status" value="1"/>
</dbReference>
<dbReference type="FunFam" id="1.10.220.20:FF:000003">
    <property type="entry name" value="Cytohesin 1"/>
    <property type="match status" value="1"/>
</dbReference>
<dbReference type="FunFam" id="2.30.29.30:FF:000009">
    <property type="entry name" value="Cytohesin 1"/>
    <property type="match status" value="1"/>
</dbReference>
<dbReference type="Gene3D" id="1.10.220.20">
    <property type="match status" value="1"/>
</dbReference>
<dbReference type="Gene3D" id="1.10.1000.11">
    <property type="entry name" value="Arf Nucleotide-binding Site Opener,domain 2"/>
    <property type="match status" value="1"/>
</dbReference>
<dbReference type="Gene3D" id="2.30.29.30">
    <property type="entry name" value="Pleckstrin-homology domain (PH domain)/Phosphotyrosine-binding domain (PTB)"/>
    <property type="match status" value="1"/>
</dbReference>
<dbReference type="InterPro" id="IPR011993">
    <property type="entry name" value="PH-like_dom_sf"/>
</dbReference>
<dbReference type="InterPro" id="IPR001849">
    <property type="entry name" value="PH_domain"/>
</dbReference>
<dbReference type="InterPro" id="IPR023394">
    <property type="entry name" value="Sec7_C_sf"/>
</dbReference>
<dbReference type="InterPro" id="IPR000904">
    <property type="entry name" value="Sec7_dom"/>
</dbReference>
<dbReference type="InterPro" id="IPR035999">
    <property type="entry name" value="Sec7_dom_sf"/>
</dbReference>
<dbReference type="PANTHER" id="PTHR10663:SF340">
    <property type="entry name" value="CYTOHESIN-1"/>
    <property type="match status" value="1"/>
</dbReference>
<dbReference type="PANTHER" id="PTHR10663">
    <property type="entry name" value="GUANYL-NUCLEOTIDE EXCHANGE FACTOR"/>
    <property type="match status" value="1"/>
</dbReference>
<dbReference type="Pfam" id="PF00169">
    <property type="entry name" value="PH"/>
    <property type="match status" value="1"/>
</dbReference>
<dbReference type="Pfam" id="PF01369">
    <property type="entry name" value="Sec7"/>
    <property type="match status" value="1"/>
</dbReference>
<dbReference type="SMART" id="SM00233">
    <property type="entry name" value="PH"/>
    <property type="match status" value="1"/>
</dbReference>
<dbReference type="SMART" id="SM00222">
    <property type="entry name" value="Sec7"/>
    <property type="match status" value="1"/>
</dbReference>
<dbReference type="SUPFAM" id="SSF50729">
    <property type="entry name" value="PH domain-like"/>
    <property type="match status" value="1"/>
</dbReference>
<dbReference type="SUPFAM" id="SSF48425">
    <property type="entry name" value="Sec7 domain"/>
    <property type="match status" value="1"/>
</dbReference>
<dbReference type="PROSITE" id="PS50003">
    <property type="entry name" value="PH_DOMAIN"/>
    <property type="match status" value="1"/>
</dbReference>
<dbReference type="PROSITE" id="PS50190">
    <property type="entry name" value="SEC7"/>
    <property type="match status" value="1"/>
</dbReference>
<gene>
    <name type="primary">CYTH1</name>
    <name type="synonym">PSCD1</name>
</gene>
<protein>
    <recommendedName>
        <fullName>Cytohesin-1</fullName>
    </recommendedName>
    <alternativeName>
        <fullName>PH, SEC7 and coiled-coil domain-containing protein 1</fullName>
    </alternativeName>
</protein>
<accession>Q76MZ1</accession>
<name>CYH1_CHLAE</name>